<proteinExistence type="inferred from homology"/>
<gene>
    <name evidence="1" type="primary">cynS</name>
    <name type="ordered locus">BTH_I1198</name>
</gene>
<organism>
    <name type="scientific">Burkholderia thailandensis (strain ATCC 700388 / DSM 13276 / CCUG 48851 / CIP 106301 / E264)</name>
    <dbReference type="NCBI Taxonomy" id="271848"/>
    <lineage>
        <taxon>Bacteria</taxon>
        <taxon>Pseudomonadati</taxon>
        <taxon>Pseudomonadota</taxon>
        <taxon>Betaproteobacteria</taxon>
        <taxon>Burkholderiales</taxon>
        <taxon>Burkholderiaceae</taxon>
        <taxon>Burkholderia</taxon>
        <taxon>pseudomallei group</taxon>
    </lineage>
</organism>
<dbReference type="EC" id="4.2.1.104" evidence="1"/>
<dbReference type="EMBL" id="CP000086">
    <property type="protein sequence ID" value="ABC37044.1"/>
    <property type="molecule type" value="Genomic_DNA"/>
</dbReference>
<dbReference type="RefSeq" id="WP_009903946.1">
    <property type="nucleotide sequence ID" value="NZ_CP008785.1"/>
</dbReference>
<dbReference type="SMR" id="Q2SZA4"/>
<dbReference type="GeneID" id="45120948"/>
<dbReference type="KEGG" id="bte:BTH_I1198"/>
<dbReference type="HOGENOM" id="CLU_103452_1_1_4"/>
<dbReference type="Proteomes" id="UP000001930">
    <property type="component" value="Chromosome I"/>
</dbReference>
<dbReference type="GO" id="GO:0008824">
    <property type="term" value="F:cyanate hydratase activity"/>
    <property type="evidence" value="ECO:0007669"/>
    <property type="project" value="UniProtKB-UniRule"/>
</dbReference>
<dbReference type="GO" id="GO:0003677">
    <property type="term" value="F:DNA binding"/>
    <property type="evidence" value="ECO:0007669"/>
    <property type="project" value="InterPro"/>
</dbReference>
<dbReference type="GO" id="GO:0009439">
    <property type="term" value="P:cyanate metabolic process"/>
    <property type="evidence" value="ECO:0007669"/>
    <property type="project" value="UniProtKB-UniRule"/>
</dbReference>
<dbReference type="CDD" id="cd00559">
    <property type="entry name" value="Cyanase_C"/>
    <property type="match status" value="1"/>
</dbReference>
<dbReference type="Gene3D" id="3.30.1160.10">
    <property type="entry name" value="Cyanate lyase, C-terminal domain"/>
    <property type="match status" value="1"/>
</dbReference>
<dbReference type="Gene3D" id="1.10.260.40">
    <property type="entry name" value="lambda repressor-like DNA-binding domains"/>
    <property type="match status" value="1"/>
</dbReference>
<dbReference type="HAMAP" id="MF_00535">
    <property type="entry name" value="Cyanate_hydrat"/>
    <property type="match status" value="1"/>
</dbReference>
<dbReference type="InterPro" id="IPR008076">
    <property type="entry name" value="Cyanase"/>
</dbReference>
<dbReference type="InterPro" id="IPR003712">
    <property type="entry name" value="Cyanate_lyase_C"/>
</dbReference>
<dbReference type="InterPro" id="IPR036581">
    <property type="entry name" value="Cyanate_lyase_C_sf"/>
</dbReference>
<dbReference type="InterPro" id="IPR048564">
    <property type="entry name" value="CYNS_N"/>
</dbReference>
<dbReference type="InterPro" id="IPR010982">
    <property type="entry name" value="Lambda_DNA-bd_dom_sf"/>
</dbReference>
<dbReference type="NCBIfam" id="TIGR00673">
    <property type="entry name" value="cynS"/>
    <property type="match status" value="1"/>
</dbReference>
<dbReference type="NCBIfam" id="NF002773">
    <property type="entry name" value="PRK02866.1"/>
    <property type="match status" value="1"/>
</dbReference>
<dbReference type="PANTHER" id="PTHR34186">
    <property type="entry name" value="CYANATE HYDRATASE"/>
    <property type="match status" value="1"/>
</dbReference>
<dbReference type="PANTHER" id="PTHR34186:SF2">
    <property type="entry name" value="CYANATE HYDRATASE"/>
    <property type="match status" value="1"/>
</dbReference>
<dbReference type="Pfam" id="PF02560">
    <property type="entry name" value="Cyanate_lyase"/>
    <property type="match status" value="1"/>
</dbReference>
<dbReference type="Pfam" id="PF21291">
    <property type="entry name" value="CYNS_N"/>
    <property type="match status" value="1"/>
</dbReference>
<dbReference type="PIRSF" id="PIRSF001263">
    <property type="entry name" value="Cyanate_hydratas"/>
    <property type="match status" value="1"/>
</dbReference>
<dbReference type="PRINTS" id="PR01693">
    <property type="entry name" value="CYANASE"/>
</dbReference>
<dbReference type="SMART" id="SM01116">
    <property type="entry name" value="Cyanate_lyase"/>
    <property type="match status" value="1"/>
</dbReference>
<dbReference type="SUPFAM" id="SSF55234">
    <property type="entry name" value="Cyanase C-terminal domain"/>
    <property type="match status" value="1"/>
</dbReference>
<dbReference type="SUPFAM" id="SSF47413">
    <property type="entry name" value="lambda repressor-like DNA-binding domains"/>
    <property type="match status" value="1"/>
</dbReference>
<feature type="chain" id="PRO_1000051475" description="Cyanate hydratase">
    <location>
        <begin position="1"/>
        <end position="156"/>
    </location>
</feature>
<feature type="active site" evidence="1">
    <location>
        <position position="96"/>
    </location>
</feature>
<feature type="active site" evidence="1">
    <location>
        <position position="99"/>
    </location>
</feature>
<feature type="active site" evidence="1">
    <location>
        <position position="122"/>
    </location>
</feature>
<reference key="1">
    <citation type="journal article" date="2005" name="BMC Genomics">
        <title>Bacterial genome adaptation to niches: divergence of the potential virulence genes in three Burkholderia species of different survival strategies.</title>
        <authorList>
            <person name="Kim H.S."/>
            <person name="Schell M.A."/>
            <person name="Yu Y."/>
            <person name="Ulrich R.L."/>
            <person name="Sarria S.H."/>
            <person name="Nierman W.C."/>
            <person name="DeShazer D."/>
        </authorList>
    </citation>
    <scope>NUCLEOTIDE SEQUENCE [LARGE SCALE GENOMIC DNA]</scope>
    <source>
        <strain>ATCC 700388 / DSM 13276 / CCUG 48851 / CIP 106301 / E264</strain>
    </source>
</reference>
<evidence type="ECO:0000255" key="1">
    <source>
        <dbReference type="HAMAP-Rule" id="MF_00535"/>
    </source>
</evidence>
<sequence length="156" mass="16970">MTQSQYSQCARDALAERIVDTKTRKHLTFEQINEGTGLSVAFTTAALLGQHPLPADAARVVAAKLDLDDDAVRLLQTIPVRGSIPGGVPTDPTIYRFYEIVQVYGSTLKALIHEQFGDGIISAINFKLDIKKVDDPDGGSRAVITLDGKYLPTKPF</sequence>
<name>CYNS_BURTA</name>
<accession>Q2SZA4</accession>
<protein>
    <recommendedName>
        <fullName evidence="1">Cyanate hydratase</fullName>
        <shortName evidence="1">Cyanase</shortName>
        <ecNumber evidence="1">4.2.1.104</ecNumber>
    </recommendedName>
    <alternativeName>
        <fullName evidence="1">Cyanate hydrolase</fullName>
    </alternativeName>
    <alternativeName>
        <fullName evidence="1">Cyanate lyase</fullName>
    </alternativeName>
</protein>
<keyword id="KW-0456">Lyase</keyword>
<comment type="function">
    <text evidence="1">Catalyzes the reaction of cyanate with bicarbonate to produce ammonia and carbon dioxide.</text>
</comment>
<comment type="catalytic activity">
    <reaction evidence="1">
        <text>cyanate + hydrogencarbonate + 3 H(+) = NH4(+) + 2 CO2</text>
        <dbReference type="Rhea" id="RHEA:11120"/>
        <dbReference type="ChEBI" id="CHEBI:15378"/>
        <dbReference type="ChEBI" id="CHEBI:16526"/>
        <dbReference type="ChEBI" id="CHEBI:17544"/>
        <dbReference type="ChEBI" id="CHEBI:28938"/>
        <dbReference type="ChEBI" id="CHEBI:29195"/>
        <dbReference type="EC" id="4.2.1.104"/>
    </reaction>
</comment>
<comment type="similarity">
    <text evidence="1">Belongs to the cyanase family.</text>
</comment>